<comment type="similarity">
    <text evidence="1">Belongs to the bacterial ribosomal protein bL33 family.</text>
</comment>
<keyword id="KW-0687">Ribonucleoprotein</keyword>
<keyword id="KW-0689">Ribosomal protein</keyword>
<proteinExistence type="inferred from homology"/>
<accession>Q02W18</accession>
<gene>
    <name evidence="1" type="primary">rpmG3</name>
    <name type="ordered locus">LACR_2408</name>
</gene>
<protein>
    <recommendedName>
        <fullName evidence="1">Large ribosomal subunit protein bL33C</fullName>
    </recommendedName>
    <alternativeName>
        <fullName evidence="1">50S ribosomal protein L33 3</fullName>
    </alternativeName>
</protein>
<name>RL333_LACLS</name>
<reference key="1">
    <citation type="journal article" date="2006" name="Proc. Natl. Acad. Sci. U.S.A.">
        <title>Comparative genomics of the lactic acid bacteria.</title>
        <authorList>
            <person name="Makarova K.S."/>
            <person name="Slesarev A."/>
            <person name="Wolf Y.I."/>
            <person name="Sorokin A."/>
            <person name="Mirkin B."/>
            <person name="Koonin E.V."/>
            <person name="Pavlov A."/>
            <person name="Pavlova N."/>
            <person name="Karamychev V."/>
            <person name="Polouchine N."/>
            <person name="Shakhova V."/>
            <person name="Grigoriev I."/>
            <person name="Lou Y."/>
            <person name="Rohksar D."/>
            <person name="Lucas S."/>
            <person name="Huang K."/>
            <person name="Goodstein D.M."/>
            <person name="Hawkins T."/>
            <person name="Plengvidhya V."/>
            <person name="Welker D."/>
            <person name="Hughes J."/>
            <person name="Goh Y."/>
            <person name="Benson A."/>
            <person name="Baldwin K."/>
            <person name="Lee J.-H."/>
            <person name="Diaz-Muniz I."/>
            <person name="Dosti B."/>
            <person name="Smeianov V."/>
            <person name="Wechter W."/>
            <person name="Barabote R."/>
            <person name="Lorca G."/>
            <person name="Altermann E."/>
            <person name="Barrangou R."/>
            <person name="Ganesan B."/>
            <person name="Xie Y."/>
            <person name="Rawsthorne H."/>
            <person name="Tamir D."/>
            <person name="Parker C."/>
            <person name="Breidt F."/>
            <person name="Broadbent J.R."/>
            <person name="Hutkins R."/>
            <person name="O'Sullivan D."/>
            <person name="Steele J."/>
            <person name="Unlu G."/>
            <person name="Saier M.H. Jr."/>
            <person name="Klaenhammer T."/>
            <person name="Richardson P."/>
            <person name="Kozyavkin S."/>
            <person name="Weimer B.C."/>
            <person name="Mills D.A."/>
        </authorList>
    </citation>
    <scope>NUCLEOTIDE SEQUENCE [LARGE SCALE GENOMIC DNA]</scope>
    <source>
        <strain>SK11</strain>
    </source>
</reference>
<evidence type="ECO:0000255" key="1">
    <source>
        <dbReference type="HAMAP-Rule" id="MF_00294"/>
    </source>
</evidence>
<feature type="chain" id="PRO_0000356520" description="Large ribosomal subunit protein bL33C">
    <location>
        <begin position="1"/>
        <end position="49"/>
    </location>
</feature>
<organism>
    <name type="scientific">Lactococcus lactis subsp. cremoris (strain SK11)</name>
    <dbReference type="NCBI Taxonomy" id="272622"/>
    <lineage>
        <taxon>Bacteria</taxon>
        <taxon>Bacillati</taxon>
        <taxon>Bacillota</taxon>
        <taxon>Bacilli</taxon>
        <taxon>Lactobacillales</taxon>
        <taxon>Streptococcaceae</taxon>
        <taxon>Lactococcus</taxon>
        <taxon>Lactococcus cremoris subsp. cremoris</taxon>
    </lineage>
</organism>
<dbReference type="EMBL" id="CP000425">
    <property type="protein sequence ID" value="ABJ73854.1"/>
    <property type="molecule type" value="Genomic_DNA"/>
</dbReference>
<dbReference type="SMR" id="Q02W18"/>
<dbReference type="KEGG" id="llc:LACR_2408"/>
<dbReference type="HOGENOM" id="CLU_190949_0_1_9"/>
<dbReference type="Proteomes" id="UP000000240">
    <property type="component" value="Chromosome"/>
</dbReference>
<dbReference type="GO" id="GO:0005737">
    <property type="term" value="C:cytoplasm"/>
    <property type="evidence" value="ECO:0007669"/>
    <property type="project" value="UniProtKB-ARBA"/>
</dbReference>
<dbReference type="GO" id="GO:1990904">
    <property type="term" value="C:ribonucleoprotein complex"/>
    <property type="evidence" value="ECO:0007669"/>
    <property type="project" value="UniProtKB-KW"/>
</dbReference>
<dbReference type="GO" id="GO:0005840">
    <property type="term" value="C:ribosome"/>
    <property type="evidence" value="ECO:0007669"/>
    <property type="project" value="UniProtKB-KW"/>
</dbReference>
<dbReference type="GO" id="GO:0003735">
    <property type="term" value="F:structural constituent of ribosome"/>
    <property type="evidence" value="ECO:0007669"/>
    <property type="project" value="InterPro"/>
</dbReference>
<dbReference type="GO" id="GO:0006412">
    <property type="term" value="P:translation"/>
    <property type="evidence" value="ECO:0007669"/>
    <property type="project" value="UniProtKB-UniRule"/>
</dbReference>
<dbReference type="Gene3D" id="2.20.28.120">
    <property type="entry name" value="Ribosomal protein L33"/>
    <property type="match status" value="1"/>
</dbReference>
<dbReference type="HAMAP" id="MF_00294">
    <property type="entry name" value="Ribosomal_bL33"/>
    <property type="match status" value="1"/>
</dbReference>
<dbReference type="InterPro" id="IPR001705">
    <property type="entry name" value="Ribosomal_bL33"/>
</dbReference>
<dbReference type="InterPro" id="IPR038584">
    <property type="entry name" value="Ribosomal_bL33_sf"/>
</dbReference>
<dbReference type="InterPro" id="IPR011332">
    <property type="entry name" value="Ribosomal_zn-bd"/>
</dbReference>
<dbReference type="NCBIfam" id="NF001764">
    <property type="entry name" value="PRK00504.1"/>
    <property type="match status" value="1"/>
</dbReference>
<dbReference type="NCBIfam" id="TIGR01023">
    <property type="entry name" value="rpmG_bact"/>
    <property type="match status" value="1"/>
</dbReference>
<dbReference type="Pfam" id="PF00471">
    <property type="entry name" value="Ribosomal_L33"/>
    <property type="match status" value="1"/>
</dbReference>
<dbReference type="SUPFAM" id="SSF57829">
    <property type="entry name" value="Zn-binding ribosomal proteins"/>
    <property type="match status" value="1"/>
</dbReference>
<sequence>MLRKAGLACTVCGSRNYTLNLSSVAKEKRVEVKKFCRTCGKHTLHKETR</sequence>